<accession>Q54QE6</accession>
<comment type="function">
    <text evidence="1">NAD-dependent deacetylase, which plays an important role in the regulation of transcriptional repression.</text>
</comment>
<comment type="catalytic activity">
    <reaction evidence="2">
        <text>N(6)-acetyl-L-lysyl-[protein] + NAD(+) + H2O = 2''-O-acetyl-ADP-D-ribose + nicotinamide + L-lysyl-[protein]</text>
        <dbReference type="Rhea" id="RHEA:43636"/>
        <dbReference type="Rhea" id="RHEA-COMP:9752"/>
        <dbReference type="Rhea" id="RHEA-COMP:10731"/>
        <dbReference type="ChEBI" id="CHEBI:15377"/>
        <dbReference type="ChEBI" id="CHEBI:17154"/>
        <dbReference type="ChEBI" id="CHEBI:29969"/>
        <dbReference type="ChEBI" id="CHEBI:57540"/>
        <dbReference type="ChEBI" id="CHEBI:61930"/>
        <dbReference type="ChEBI" id="CHEBI:83767"/>
        <dbReference type="EC" id="2.3.1.286"/>
    </reaction>
</comment>
<comment type="cofactor">
    <cofactor evidence="1">
        <name>Zn(2+)</name>
        <dbReference type="ChEBI" id="CHEBI:29105"/>
    </cofactor>
    <text evidence="1">Binds 1 zinc ion per subunit.</text>
</comment>
<comment type="developmental stage">
    <text evidence="5">Expressed at high levels in growing cells, but at decreased levels in developing cells. Expressed in both prestalk and prespore cells.</text>
</comment>
<comment type="similarity">
    <text evidence="6">Belongs to the sirtuin family.</text>
</comment>
<gene>
    <name type="primary">sir2A</name>
    <name type="ORF">DDB_G0283917</name>
</gene>
<feature type="chain" id="PRO_0000393125" description="NAD-dependent deacetylase sir2A">
    <location>
        <begin position="1"/>
        <end position="512"/>
    </location>
</feature>
<feature type="domain" description="Deacetylase sirtuin-type" evidence="2">
    <location>
        <begin position="231"/>
        <end position="503"/>
    </location>
</feature>
<feature type="zinc finger region" description="UBP-type" evidence="3">
    <location>
        <begin position="7"/>
        <end position="110"/>
    </location>
</feature>
<feature type="region of interest" description="Disordered" evidence="4">
    <location>
        <begin position="113"/>
        <end position="196"/>
    </location>
</feature>
<feature type="compositionally biased region" description="Basic and acidic residues" evidence="4">
    <location>
        <begin position="113"/>
        <end position="122"/>
    </location>
</feature>
<feature type="compositionally biased region" description="Low complexity" evidence="4">
    <location>
        <begin position="130"/>
        <end position="175"/>
    </location>
</feature>
<feature type="compositionally biased region" description="Acidic residues" evidence="4">
    <location>
        <begin position="176"/>
        <end position="195"/>
    </location>
</feature>
<feature type="active site" description="Proton acceptor" evidence="2">
    <location>
        <position position="361"/>
    </location>
</feature>
<feature type="binding site" evidence="3">
    <location>
        <position position="9"/>
    </location>
    <ligand>
        <name>Zn(2+)</name>
        <dbReference type="ChEBI" id="CHEBI:29105"/>
        <label>1</label>
    </ligand>
</feature>
<feature type="binding site" evidence="3">
    <location>
        <position position="11"/>
    </location>
    <ligand>
        <name>Zn(2+)</name>
        <dbReference type="ChEBI" id="CHEBI:29105"/>
        <label>1</label>
    </ligand>
</feature>
<feature type="binding site" evidence="3">
    <location>
        <position position="34"/>
    </location>
    <ligand>
        <name>Zn(2+)</name>
        <dbReference type="ChEBI" id="CHEBI:29105"/>
        <label>2</label>
    </ligand>
</feature>
<feature type="binding site" evidence="3">
    <location>
        <position position="37"/>
    </location>
    <ligand>
        <name>Zn(2+)</name>
        <dbReference type="ChEBI" id="CHEBI:29105"/>
        <label>2</label>
    </ligand>
</feature>
<feature type="binding site" evidence="3">
    <location>
        <position position="46"/>
    </location>
    <ligand>
        <name>Zn(2+)</name>
        <dbReference type="ChEBI" id="CHEBI:29105"/>
        <label>3</label>
    </ligand>
</feature>
<feature type="binding site" evidence="3">
    <location>
        <position position="49"/>
    </location>
    <ligand>
        <name>Zn(2+)</name>
        <dbReference type="ChEBI" id="CHEBI:29105"/>
        <label>3</label>
    </ligand>
</feature>
<feature type="binding site" evidence="3">
    <location>
        <position position="54"/>
    </location>
    <ligand>
        <name>Zn(2+)</name>
        <dbReference type="ChEBI" id="CHEBI:29105"/>
        <label>2</label>
    </ligand>
</feature>
<feature type="binding site" evidence="3">
    <location>
        <position position="61"/>
    </location>
    <ligand>
        <name>Zn(2+)</name>
        <dbReference type="ChEBI" id="CHEBI:29105"/>
        <label>2</label>
    </ligand>
</feature>
<feature type="binding site" evidence="3">
    <location>
        <position position="65"/>
    </location>
    <ligand>
        <name>Zn(2+)</name>
        <dbReference type="ChEBI" id="CHEBI:29105"/>
        <label>3</label>
    </ligand>
</feature>
<feature type="binding site" evidence="3">
    <location>
        <position position="71"/>
    </location>
    <ligand>
        <name>Zn(2+)</name>
        <dbReference type="ChEBI" id="CHEBI:29105"/>
        <label>3</label>
    </ligand>
</feature>
<feature type="binding site" evidence="3">
    <location>
        <position position="84"/>
    </location>
    <ligand>
        <name>Zn(2+)</name>
        <dbReference type="ChEBI" id="CHEBI:29105"/>
        <label>1</label>
    </ligand>
</feature>
<feature type="binding site" evidence="3">
    <location>
        <position position="87"/>
    </location>
    <ligand>
        <name>Zn(2+)</name>
        <dbReference type="ChEBI" id="CHEBI:29105"/>
        <label>1</label>
    </ligand>
</feature>
<feature type="binding site" evidence="2">
    <location>
        <position position="369"/>
    </location>
    <ligand>
        <name>Zn(2+)</name>
        <dbReference type="ChEBI" id="CHEBI:29105"/>
        <label>4</label>
    </ligand>
</feature>
<feature type="binding site" evidence="2">
    <location>
        <position position="372"/>
    </location>
    <ligand>
        <name>Zn(2+)</name>
        <dbReference type="ChEBI" id="CHEBI:29105"/>
        <label>4</label>
    </ligand>
</feature>
<feature type="binding site" evidence="2">
    <location>
        <position position="393"/>
    </location>
    <ligand>
        <name>Zn(2+)</name>
        <dbReference type="ChEBI" id="CHEBI:29105"/>
        <label>4</label>
    </ligand>
</feature>
<feature type="binding site" evidence="2">
    <location>
        <position position="399"/>
    </location>
    <ligand>
        <name>Zn(2+)</name>
        <dbReference type="ChEBI" id="CHEBI:29105"/>
        <label>4</label>
    </ligand>
</feature>
<name>SIR2A_DICDI</name>
<dbReference type="EC" id="2.3.1.286" evidence="2"/>
<dbReference type="EMBL" id="AAFI02000058">
    <property type="protein sequence ID" value="EAL65446.1"/>
    <property type="molecule type" value="Genomic_DNA"/>
</dbReference>
<dbReference type="RefSeq" id="XP_638798.1">
    <property type="nucleotide sequence ID" value="XM_633706.1"/>
</dbReference>
<dbReference type="SMR" id="Q54QE6"/>
<dbReference type="FunCoup" id="Q54QE6">
    <property type="interactions" value="561"/>
</dbReference>
<dbReference type="STRING" id="44689.Q54QE6"/>
<dbReference type="PaxDb" id="44689-DDB0216430"/>
<dbReference type="EnsemblProtists" id="EAL65446">
    <property type="protein sequence ID" value="EAL65446"/>
    <property type="gene ID" value="DDB_G0283917"/>
</dbReference>
<dbReference type="GeneID" id="8624322"/>
<dbReference type="KEGG" id="ddi:DDB_G0283917"/>
<dbReference type="dictyBase" id="DDB_G0283917">
    <property type="gene designation" value="sir2A"/>
</dbReference>
<dbReference type="VEuPathDB" id="AmoebaDB:DDB_G0283917"/>
<dbReference type="eggNOG" id="KOG1343">
    <property type="taxonomic scope" value="Eukaryota"/>
</dbReference>
<dbReference type="eggNOG" id="KOG2682">
    <property type="taxonomic scope" value="Eukaryota"/>
</dbReference>
<dbReference type="HOGENOM" id="CLU_600549_0_0_1"/>
<dbReference type="InParanoid" id="Q54QE6"/>
<dbReference type="OMA" id="ARCIECQ"/>
<dbReference type="PhylomeDB" id="Q54QE6"/>
<dbReference type="Reactome" id="R-DDI-2151201">
    <property type="pathway name" value="Transcriptional activation of mitochondrial biogenesis"/>
</dbReference>
<dbReference type="PRO" id="PR:Q54QE6"/>
<dbReference type="Proteomes" id="UP000002195">
    <property type="component" value="Chromosome 4"/>
</dbReference>
<dbReference type="GO" id="GO:0005737">
    <property type="term" value="C:cytoplasm"/>
    <property type="evidence" value="ECO:0000314"/>
    <property type="project" value="dictyBase"/>
</dbReference>
<dbReference type="GO" id="GO:0005634">
    <property type="term" value="C:nucleus"/>
    <property type="evidence" value="ECO:0000318"/>
    <property type="project" value="GO_Central"/>
</dbReference>
<dbReference type="GO" id="GO:0017136">
    <property type="term" value="F:histone deacetylase activity, NAD-dependent"/>
    <property type="evidence" value="ECO:0000318"/>
    <property type="project" value="GO_Central"/>
</dbReference>
<dbReference type="GO" id="GO:0070403">
    <property type="term" value="F:NAD+ binding"/>
    <property type="evidence" value="ECO:0000318"/>
    <property type="project" value="GO_Central"/>
</dbReference>
<dbReference type="GO" id="GO:0008270">
    <property type="term" value="F:zinc ion binding"/>
    <property type="evidence" value="ECO:0007669"/>
    <property type="project" value="UniProtKB-KW"/>
</dbReference>
<dbReference type="GO" id="GO:0061909">
    <property type="term" value="P:autophagosome-lysosome fusion"/>
    <property type="evidence" value="ECO:0000315"/>
    <property type="project" value="dictyBase"/>
</dbReference>
<dbReference type="GO" id="GO:0010629">
    <property type="term" value="P:negative regulation of gene expression"/>
    <property type="evidence" value="ECO:0000315"/>
    <property type="project" value="dictyBase"/>
</dbReference>
<dbReference type="GO" id="GO:0010628">
    <property type="term" value="P:positive regulation of gene expression"/>
    <property type="evidence" value="ECO:0000315"/>
    <property type="project" value="dictyBase"/>
</dbReference>
<dbReference type="GO" id="GO:0000183">
    <property type="term" value="P:rDNA heterochromatin formation"/>
    <property type="evidence" value="ECO:0000318"/>
    <property type="project" value="GO_Central"/>
</dbReference>
<dbReference type="GO" id="GO:0044671">
    <property type="term" value="P:sorocarp spore cell differentiation"/>
    <property type="evidence" value="ECO:0000315"/>
    <property type="project" value="dictyBase"/>
</dbReference>
<dbReference type="GO" id="GO:0031149">
    <property type="term" value="P:sorocarp stalk cell differentiation"/>
    <property type="evidence" value="ECO:0000315"/>
    <property type="project" value="dictyBase"/>
</dbReference>
<dbReference type="CDD" id="cd01408">
    <property type="entry name" value="SIRT1"/>
    <property type="match status" value="1"/>
</dbReference>
<dbReference type="Gene3D" id="3.30.1600.10">
    <property type="entry name" value="SIR2/SIRT2 'Small Domain"/>
    <property type="match status" value="1"/>
</dbReference>
<dbReference type="Gene3D" id="3.40.50.1220">
    <property type="entry name" value="TPP-binding domain"/>
    <property type="match status" value="1"/>
</dbReference>
<dbReference type="Gene3D" id="3.30.40.10">
    <property type="entry name" value="Zinc/RING finger domain, C3HC4 (zinc finger)"/>
    <property type="match status" value="1"/>
</dbReference>
<dbReference type="InterPro" id="IPR029035">
    <property type="entry name" value="DHS-like_NAD/FAD-binding_dom"/>
</dbReference>
<dbReference type="InterPro" id="IPR050134">
    <property type="entry name" value="NAD-dep_sirtuin_deacylases"/>
</dbReference>
<dbReference type="InterPro" id="IPR003000">
    <property type="entry name" value="Sirtuin"/>
</dbReference>
<dbReference type="InterPro" id="IPR026591">
    <property type="entry name" value="Sirtuin_cat_small_dom_sf"/>
</dbReference>
<dbReference type="InterPro" id="IPR026590">
    <property type="entry name" value="Ssirtuin_cat_dom"/>
</dbReference>
<dbReference type="InterPro" id="IPR013083">
    <property type="entry name" value="Znf_RING/FYVE/PHD"/>
</dbReference>
<dbReference type="InterPro" id="IPR001607">
    <property type="entry name" value="Znf_UBP"/>
</dbReference>
<dbReference type="PANTHER" id="PTHR11085:SF6">
    <property type="entry name" value="NAD-DEPENDENT PROTEIN DEACETYLASE SIRTUIN-2"/>
    <property type="match status" value="1"/>
</dbReference>
<dbReference type="PANTHER" id="PTHR11085">
    <property type="entry name" value="NAD-DEPENDENT PROTEIN DEACYLASE SIRTUIN-5, MITOCHONDRIAL-RELATED"/>
    <property type="match status" value="1"/>
</dbReference>
<dbReference type="Pfam" id="PF02146">
    <property type="entry name" value="SIR2"/>
    <property type="match status" value="1"/>
</dbReference>
<dbReference type="Pfam" id="PF02148">
    <property type="entry name" value="zf-UBP"/>
    <property type="match status" value="1"/>
</dbReference>
<dbReference type="SMART" id="SM00290">
    <property type="entry name" value="ZnF_UBP"/>
    <property type="match status" value="1"/>
</dbReference>
<dbReference type="SUPFAM" id="SSF52467">
    <property type="entry name" value="DHS-like NAD/FAD-binding domain"/>
    <property type="match status" value="1"/>
</dbReference>
<dbReference type="SUPFAM" id="SSF57850">
    <property type="entry name" value="RING/U-box"/>
    <property type="match status" value="1"/>
</dbReference>
<dbReference type="PROSITE" id="PS50305">
    <property type="entry name" value="SIRTUIN"/>
    <property type="match status" value="1"/>
</dbReference>
<dbReference type="PROSITE" id="PS50271">
    <property type="entry name" value="ZF_UBP"/>
    <property type="match status" value="1"/>
</dbReference>
<protein>
    <recommendedName>
        <fullName>NAD-dependent deacetylase sir2A</fullName>
        <ecNumber evidence="2">2.3.1.286</ecNumber>
    </recommendedName>
    <alternativeName>
        <fullName>Silent information regulator sir2A</fullName>
    </alternativeName>
</protein>
<sequence length="512" mass="57413">MYAVNPIECIHLKDEYDTCINKSIFDKDLKITKCHACNDESENWICMTCGVVSCSRHVNGHAGEHFENTKHPISASFSDHSFWCYTCDTYVHNTPLFDICEILENIKSSNKKDKIVPKKDQKEEEEEDQVVPSASITTSSTTTSISKQTTVNNTTTTSSSSTTTTTTTTSTTINNNEEEEESESETDESSSEGEESLSLIQRMREMIFGVGRGPKIVAPSEQEESEEDESCVLKKPTIEEIAKYINSAKCKNIIVMTGAGISVAAGIPDFRSPKTGLYEKLDKYDLPYREAIFDIEYFKKNPKPFYVLSKELFPGSFNPTTVHYFIKLLSDKGLLLRNFTQNIDTLERIAGIPANKLVEAHGSFATSHCVSCKKEYSTEYVKERIFKDELPECTETSGCKGIVKPDIVFFGESLPSRFNDCAREDFTKCDLLLVIGTSLKVHPFASLINFAKGCPRVLINFEEVGTNPYGGFKFNQPSNKLDVKCIGDCQTLVLDLIKLLGWENEFNQIVKN</sequence>
<keyword id="KW-0479">Metal-binding</keyword>
<keyword id="KW-0520">NAD</keyword>
<keyword id="KW-1185">Reference proteome</keyword>
<keyword id="KW-0808">Transferase</keyword>
<keyword id="KW-0862">Zinc</keyword>
<keyword id="KW-0863">Zinc-finger</keyword>
<organism>
    <name type="scientific">Dictyostelium discoideum</name>
    <name type="common">Social amoeba</name>
    <dbReference type="NCBI Taxonomy" id="44689"/>
    <lineage>
        <taxon>Eukaryota</taxon>
        <taxon>Amoebozoa</taxon>
        <taxon>Evosea</taxon>
        <taxon>Eumycetozoa</taxon>
        <taxon>Dictyostelia</taxon>
        <taxon>Dictyosteliales</taxon>
        <taxon>Dictyosteliaceae</taxon>
        <taxon>Dictyostelium</taxon>
    </lineage>
</organism>
<proteinExistence type="evidence at transcript level"/>
<evidence type="ECO:0000250" key="1"/>
<evidence type="ECO:0000255" key="2">
    <source>
        <dbReference type="PROSITE-ProRule" id="PRU00236"/>
    </source>
</evidence>
<evidence type="ECO:0000255" key="3">
    <source>
        <dbReference type="PROSITE-ProRule" id="PRU00502"/>
    </source>
</evidence>
<evidence type="ECO:0000256" key="4">
    <source>
        <dbReference type="SAM" id="MobiDB-lite"/>
    </source>
</evidence>
<evidence type="ECO:0000269" key="5">
    <source ref="2"/>
</evidence>
<evidence type="ECO:0000305" key="6"/>
<reference key="1">
    <citation type="journal article" date="2005" name="Nature">
        <title>The genome of the social amoeba Dictyostelium discoideum.</title>
        <authorList>
            <person name="Eichinger L."/>
            <person name="Pachebat J.A."/>
            <person name="Gloeckner G."/>
            <person name="Rajandream M.A."/>
            <person name="Sucgang R."/>
            <person name="Berriman M."/>
            <person name="Song J."/>
            <person name="Olsen R."/>
            <person name="Szafranski K."/>
            <person name="Xu Q."/>
            <person name="Tunggal B."/>
            <person name="Kummerfeld S."/>
            <person name="Madera M."/>
            <person name="Konfortov B.A."/>
            <person name="Rivero F."/>
            <person name="Bankier A.T."/>
            <person name="Lehmann R."/>
            <person name="Hamlin N."/>
            <person name="Davies R."/>
            <person name="Gaudet P."/>
            <person name="Fey P."/>
            <person name="Pilcher K."/>
            <person name="Chen G."/>
            <person name="Saunders D."/>
            <person name="Sodergren E.J."/>
            <person name="Davis P."/>
            <person name="Kerhornou A."/>
            <person name="Nie X."/>
            <person name="Hall N."/>
            <person name="Anjard C."/>
            <person name="Hemphill L."/>
            <person name="Bason N."/>
            <person name="Farbrother P."/>
            <person name="Desany B."/>
            <person name="Just E."/>
            <person name="Morio T."/>
            <person name="Rost R."/>
            <person name="Churcher C.M."/>
            <person name="Cooper J."/>
            <person name="Haydock S."/>
            <person name="van Driessche N."/>
            <person name="Cronin A."/>
            <person name="Goodhead I."/>
            <person name="Muzny D.M."/>
            <person name="Mourier T."/>
            <person name="Pain A."/>
            <person name="Lu M."/>
            <person name="Harper D."/>
            <person name="Lindsay R."/>
            <person name="Hauser H."/>
            <person name="James K.D."/>
            <person name="Quiles M."/>
            <person name="Madan Babu M."/>
            <person name="Saito T."/>
            <person name="Buchrieser C."/>
            <person name="Wardroper A."/>
            <person name="Felder M."/>
            <person name="Thangavelu M."/>
            <person name="Johnson D."/>
            <person name="Knights A."/>
            <person name="Loulseged H."/>
            <person name="Mungall K.L."/>
            <person name="Oliver K."/>
            <person name="Price C."/>
            <person name="Quail M.A."/>
            <person name="Urushihara H."/>
            <person name="Hernandez J."/>
            <person name="Rabbinowitsch E."/>
            <person name="Steffen D."/>
            <person name="Sanders M."/>
            <person name="Ma J."/>
            <person name="Kohara Y."/>
            <person name="Sharp S."/>
            <person name="Simmonds M.N."/>
            <person name="Spiegler S."/>
            <person name="Tivey A."/>
            <person name="Sugano S."/>
            <person name="White B."/>
            <person name="Walker D."/>
            <person name="Woodward J.R."/>
            <person name="Winckler T."/>
            <person name="Tanaka Y."/>
            <person name="Shaulsky G."/>
            <person name="Schleicher M."/>
            <person name="Weinstock G.M."/>
            <person name="Rosenthal A."/>
            <person name="Cox E.C."/>
            <person name="Chisholm R.L."/>
            <person name="Gibbs R.A."/>
            <person name="Loomis W.F."/>
            <person name="Platzer M."/>
            <person name="Kay R.R."/>
            <person name="Williams J.G."/>
            <person name="Dear P.H."/>
            <person name="Noegel A.A."/>
            <person name="Barrell B.G."/>
            <person name="Kuspa A."/>
        </authorList>
    </citation>
    <scope>NUCLEOTIDE SEQUENCE [LARGE SCALE GENOMIC DNA]</scope>
    <source>
        <strain>AX4</strain>
    </source>
</reference>
<reference key="2">
    <citation type="journal article" date="2008" name="Microbes Environ.">
        <title>Developmental and spatial expression of sir2 genes in the cellular slime mold Dictyostelium discoideum.</title>
        <authorList>
            <person name="Katayama T."/>
            <person name="Yasukawa H."/>
        </authorList>
    </citation>
    <scope>DEVELOPMENTAL STAGE</scope>
</reference>